<sequence length="428" mass="45914">MSAIVDIIGREILDSRGNPTVECDVLLESGAMGRASVPSGASTGSREAIELRDGDKGRYLGKGVLRAVENLNTEISEALMGLDAQEQTFVDRTLIELDGTDSKERLGANAMLAASMAVARAAADESGLSLYRYFGGSGPMSMPVPMMNVINGGAHANNTLDLQELMILPVGAASFREALRWGAEVFHMLKKLIHDQGMSTAVGDEGGFAPNVASHEAAIQLILKAITEAGYEPGTQIALGLDCASSEFYRDGKYTLAGEGGVSLSSQEFANLLATWCDKYPIISIEDGMAENDWDGWKLLTDQLGKKVQLVGDDLFVTNTRILREGIQKGVANSILIKINQIGTLTETFAAIEMAKRAGYTAVVSHRSGETEDSTIADIAVATNAMQIKTGSLSRSDRMAKYNQLLRIEEELAEVASYPGLEAFYNLR</sequence>
<keyword id="KW-0963">Cytoplasm</keyword>
<keyword id="KW-0324">Glycolysis</keyword>
<keyword id="KW-0456">Lyase</keyword>
<keyword id="KW-0460">Magnesium</keyword>
<keyword id="KW-0479">Metal-binding</keyword>
<keyword id="KW-0964">Secreted</keyword>
<dbReference type="EC" id="4.2.1.11" evidence="1"/>
<dbReference type="EMBL" id="BX640433">
    <property type="protein sequence ID" value="CAE38537.1"/>
    <property type="molecule type" value="Genomic_DNA"/>
</dbReference>
<dbReference type="RefSeq" id="WP_003813700.1">
    <property type="nucleotide sequence ID" value="NC_002928.3"/>
</dbReference>
<dbReference type="SMR" id="Q7W5N9"/>
<dbReference type="GeneID" id="93205034"/>
<dbReference type="KEGG" id="bpa:BPP3252"/>
<dbReference type="HOGENOM" id="CLU_031223_2_1_4"/>
<dbReference type="UniPathway" id="UPA00109">
    <property type="reaction ID" value="UER00187"/>
</dbReference>
<dbReference type="Proteomes" id="UP000001421">
    <property type="component" value="Chromosome"/>
</dbReference>
<dbReference type="GO" id="GO:0009986">
    <property type="term" value="C:cell surface"/>
    <property type="evidence" value="ECO:0007669"/>
    <property type="project" value="UniProtKB-SubCell"/>
</dbReference>
<dbReference type="GO" id="GO:0005576">
    <property type="term" value="C:extracellular region"/>
    <property type="evidence" value="ECO:0007669"/>
    <property type="project" value="UniProtKB-SubCell"/>
</dbReference>
<dbReference type="GO" id="GO:0000015">
    <property type="term" value="C:phosphopyruvate hydratase complex"/>
    <property type="evidence" value="ECO:0007669"/>
    <property type="project" value="InterPro"/>
</dbReference>
<dbReference type="GO" id="GO:0000287">
    <property type="term" value="F:magnesium ion binding"/>
    <property type="evidence" value="ECO:0007669"/>
    <property type="project" value="UniProtKB-UniRule"/>
</dbReference>
<dbReference type="GO" id="GO:0004634">
    <property type="term" value="F:phosphopyruvate hydratase activity"/>
    <property type="evidence" value="ECO:0007669"/>
    <property type="project" value="UniProtKB-UniRule"/>
</dbReference>
<dbReference type="GO" id="GO:0006096">
    <property type="term" value="P:glycolytic process"/>
    <property type="evidence" value="ECO:0007669"/>
    <property type="project" value="UniProtKB-UniRule"/>
</dbReference>
<dbReference type="CDD" id="cd03313">
    <property type="entry name" value="enolase"/>
    <property type="match status" value="1"/>
</dbReference>
<dbReference type="FunFam" id="3.20.20.120:FF:000001">
    <property type="entry name" value="Enolase"/>
    <property type="match status" value="1"/>
</dbReference>
<dbReference type="FunFam" id="3.30.390.10:FF:000001">
    <property type="entry name" value="Enolase"/>
    <property type="match status" value="1"/>
</dbReference>
<dbReference type="Gene3D" id="3.20.20.120">
    <property type="entry name" value="Enolase-like C-terminal domain"/>
    <property type="match status" value="1"/>
</dbReference>
<dbReference type="Gene3D" id="3.30.390.10">
    <property type="entry name" value="Enolase-like, N-terminal domain"/>
    <property type="match status" value="1"/>
</dbReference>
<dbReference type="HAMAP" id="MF_00318">
    <property type="entry name" value="Enolase"/>
    <property type="match status" value="1"/>
</dbReference>
<dbReference type="InterPro" id="IPR000941">
    <property type="entry name" value="Enolase"/>
</dbReference>
<dbReference type="InterPro" id="IPR036849">
    <property type="entry name" value="Enolase-like_C_sf"/>
</dbReference>
<dbReference type="InterPro" id="IPR029017">
    <property type="entry name" value="Enolase-like_N"/>
</dbReference>
<dbReference type="InterPro" id="IPR020810">
    <property type="entry name" value="Enolase_C"/>
</dbReference>
<dbReference type="InterPro" id="IPR020809">
    <property type="entry name" value="Enolase_CS"/>
</dbReference>
<dbReference type="InterPro" id="IPR020811">
    <property type="entry name" value="Enolase_N"/>
</dbReference>
<dbReference type="NCBIfam" id="TIGR01060">
    <property type="entry name" value="eno"/>
    <property type="match status" value="1"/>
</dbReference>
<dbReference type="PANTHER" id="PTHR11902">
    <property type="entry name" value="ENOLASE"/>
    <property type="match status" value="1"/>
</dbReference>
<dbReference type="PANTHER" id="PTHR11902:SF1">
    <property type="entry name" value="ENOLASE"/>
    <property type="match status" value="1"/>
</dbReference>
<dbReference type="Pfam" id="PF00113">
    <property type="entry name" value="Enolase_C"/>
    <property type="match status" value="1"/>
</dbReference>
<dbReference type="Pfam" id="PF03952">
    <property type="entry name" value="Enolase_N"/>
    <property type="match status" value="1"/>
</dbReference>
<dbReference type="PIRSF" id="PIRSF001400">
    <property type="entry name" value="Enolase"/>
    <property type="match status" value="1"/>
</dbReference>
<dbReference type="PRINTS" id="PR00148">
    <property type="entry name" value="ENOLASE"/>
</dbReference>
<dbReference type="SFLD" id="SFLDF00002">
    <property type="entry name" value="enolase"/>
    <property type="match status" value="1"/>
</dbReference>
<dbReference type="SFLD" id="SFLDG00178">
    <property type="entry name" value="enolase"/>
    <property type="match status" value="1"/>
</dbReference>
<dbReference type="SMART" id="SM01192">
    <property type="entry name" value="Enolase_C"/>
    <property type="match status" value="1"/>
</dbReference>
<dbReference type="SMART" id="SM01193">
    <property type="entry name" value="Enolase_N"/>
    <property type="match status" value="1"/>
</dbReference>
<dbReference type="SUPFAM" id="SSF51604">
    <property type="entry name" value="Enolase C-terminal domain-like"/>
    <property type="match status" value="1"/>
</dbReference>
<dbReference type="SUPFAM" id="SSF54826">
    <property type="entry name" value="Enolase N-terminal domain-like"/>
    <property type="match status" value="1"/>
</dbReference>
<dbReference type="PROSITE" id="PS00164">
    <property type="entry name" value="ENOLASE"/>
    <property type="match status" value="1"/>
</dbReference>
<protein>
    <recommendedName>
        <fullName evidence="1">Enolase</fullName>
        <ecNumber evidence="1">4.2.1.11</ecNumber>
    </recommendedName>
    <alternativeName>
        <fullName evidence="1">2-phospho-D-glycerate hydro-lyase</fullName>
    </alternativeName>
    <alternativeName>
        <fullName evidence="1">2-phosphoglycerate dehydratase</fullName>
    </alternativeName>
</protein>
<name>ENO_BORPA</name>
<feature type="chain" id="PRO_0000133850" description="Enolase">
    <location>
        <begin position="1"/>
        <end position="428"/>
    </location>
</feature>
<feature type="active site" description="Proton donor" evidence="1">
    <location>
        <position position="205"/>
    </location>
</feature>
<feature type="active site" description="Proton acceptor" evidence="1">
    <location>
        <position position="338"/>
    </location>
</feature>
<feature type="binding site" evidence="1">
    <location>
        <position position="163"/>
    </location>
    <ligand>
        <name>(2R)-2-phosphoglycerate</name>
        <dbReference type="ChEBI" id="CHEBI:58289"/>
    </ligand>
</feature>
<feature type="binding site" evidence="1">
    <location>
        <position position="242"/>
    </location>
    <ligand>
        <name>Mg(2+)</name>
        <dbReference type="ChEBI" id="CHEBI:18420"/>
    </ligand>
</feature>
<feature type="binding site" evidence="1">
    <location>
        <position position="286"/>
    </location>
    <ligand>
        <name>Mg(2+)</name>
        <dbReference type="ChEBI" id="CHEBI:18420"/>
    </ligand>
</feature>
<feature type="binding site" evidence="1">
    <location>
        <position position="313"/>
    </location>
    <ligand>
        <name>Mg(2+)</name>
        <dbReference type="ChEBI" id="CHEBI:18420"/>
    </ligand>
</feature>
<feature type="binding site" evidence="1">
    <location>
        <position position="338"/>
    </location>
    <ligand>
        <name>(2R)-2-phosphoglycerate</name>
        <dbReference type="ChEBI" id="CHEBI:58289"/>
    </ligand>
</feature>
<feature type="binding site" evidence="1">
    <location>
        <position position="367"/>
    </location>
    <ligand>
        <name>(2R)-2-phosphoglycerate</name>
        <dbReference type="ChEBI" id="CHEBI:58289"/>
    </ligand>
</feature>
<feature type="binding site" evidence="1">
    <location>
        <position position="368"/>
    </location>
    <ligand>
        <name>(2R)-2-phosphoglycerate</name>
        <dbReference type="ChEBI" id="CHEBI:58289"/>
    </ligand>
</feature>
<feature type="binding site" evidence="1">
    <location>
        <position position="389"/>
    </location>
    <ligand>
        <name>(2R)-2-phosphoglycerate</name>
        <dbReference type="ChEBI" id="CHEBI:58289"/>
    </ligand>
</feature>
<comment type="function">
    <text evidence="1">Catalyzes the reversible conversion of 2-phosphoglycerate (2-PG) into phosphoenolpyruvate (PEP). It is essential for the degradation of carbohydrates via glycolysis.</text>
</comment>
<comment type="catalytic activity">
    <reaction evidence="1">
        <text>(2R)-2-phosphoglycerate = phosphoenolpyruvate + H2O</text>
        <dbReference type="Rhea" id="RHEA:10164"/>
        <dbReference type="ChEBI" id="CHEBI:15377"/>
        <dbReference type="ChEBI" id="CHEBI:58289"/>
        <dbReference type="ChEBI" id="CHEBI:58702"/>
        <dbReference type="EC" id="4.2.1.11"/>
    </reaction>
</comment>
<comment type="cofactor">
    <cofactor evidence="1">
        <name>Mg(2+)</name>
        <dbReference type="ChEBI" id="CHEBI:18420"/>
    </cofactor>
    <text evidence="1">Binds a second Mg(2+) ion via substrate during catalysis.</text>
</comment>
<comment type="pathway">
    <text evidence="1">Carbohydrate degradation; glycolysis; pyruvate from D-glyceraldehyde 3-phosphate: step 4/5.</text>
</comment>
<comment type="subcellular location">
    <subcellularLocation>
        <location evidence="1">Cytoplasm</location>
    </subcellularLocation>
    <subcellularLocation>
        <location evidence="1">Secreted</location>
    </subcellularLocation>
    <subcellularLocation>
        <location evidence="1">Cell surface</location>
    </subcellularLocation>
    <text evidence="1">Fractions of enolase are present in both the cytoplasm and on the cell surface.</text>
</comment>
<comment type="similarity">
    <text evidence="1">Belongs to the enolase family.</text>
</comment>
<gene>
    <name evidence="1" type="primary">eno</name>
    <name type="ordered locus">BPP3252</name>
</gene>
<proteinExistence type="inferred from homology"/>
<evidence type="ECO:0000255" key="1">
    <source>
        <dbReference type="HAMAP-Rule" id="MF_00318"/>
    </source>
</evidence>
<organism>
    <name type="scientific">Bordetella parapertussis (strain 12822 / ATCC BAA-587 / NCTC 13253)</name>
    <dbReference type="NCBI Taxonomy" id="257311"/>
    <lineage>
        <taxon>Bacteria</taxon>
        <taxon>Pseudomonadati</taxon>
        <taxon>Pseudomonadota</taxon>
        <taxon>Betaproteobacteria</taxon>
        <taxon>Burkholderiales</taxon>
        <taxon>Alcaligenaceae</taxon>
        <taxon>Bordetella</taxon>
    </lineage>
</organism>
<reference key="1">
    <citation type="journal article" date="2003" name="Nat. Genet.">
        <title>Comparative analysis of the genome sequences of Bordetella pertussis, Bordetella parapertussis and Bordetella bronchiseptica.</title>
        <authorList>
            <person name="Parkhill J."/>
            <person name="Sebaihia M."/>
            <person name="Preston A."/>
            <person name="Murphy L.D."/>
            <person name="Thomson N.R."/>
            <person name="Harris D.E."/>
            <person name="Holden M.T.G."/>
            <person name="Churcher C.M."/>
            <person name="Bentley S.D."/>
            <person name="Mungall K.L."/>
            <person name="Cerdeno-Tarraga A.-M."/>
            <person name="Temple L."/>
            <person name="James K.D."/>
            <person name="Harris B."/>
            <person name="Quail M.A."/>
            <person name="Achtman M."/>
            <person name="Atkin R."/>
            <person name="Baker S."/>
            <person name="Basham D."/>
            <person name="Bason N."/>
            <person name="Cherevach I."/>
            <person name="Chillingworth T."/>
            <person name="Collins M."/>
            <person name="Cronin A."/>
            <person name="Davis P."/>
            <person name="Doggett J."/>
            <person name="Feltwell T."/>
            <person name="Goble A."/>
            <person name="Hamlin N."/>
            <person name="Hauser H."/>
            <person name="Holroyd S."/>
            <person name="Jagels K."/>
            <person name="Leather S."/>
            <person name="Moule S."/>
            <person name="Norberczak H."/>
            <person name="O'Neil S."/>
            <person name="Ormond D."/>
            <person name="Price C."/>
            <person name="Rabbinowitsch E."/>
            <person name="Rutter S."/>
            <person name="Sanders M."/>
            <person name="Saunders D."/>
            <person name="Seeger K."/>
            <person name="Sharp S."/>
            <person name="Simmonds M."/>
            <person name="Skelton J."/>
            <person name="Squares R."/>
            <person name="Squares S."/>
            <person name="Stevens K."/>
            <person name="Unwin L."/>
            <person name="Whitehead S."/>
            <person name="Barrell B.G."/>
            <person name="Maskell D.J."/>
        </authorList>
    </citation>
    <scope>NUCLEOTIDE SEQUENCE [LARGE SCALE GENOMIC DNA]</scope>
    <source>
        <strain>12822 / ATCC BAA-587 / NCTC 13253</strain>
    </source>
</reference>
<accession>Q7W5N9</accession>